<proteinExistence type="inferred from homology"/>
<evidence type="ECO:0000255" key="1">
    <source>
        <dbReference type="HAMAP-Rule" id="MF_00171"/>
    </source>
</evidence>
<accession>Q3AMQ5</accession>
<gene>
    <name evidence="1" type="primary">truA</name>
    <name type="ordered locus">Syncc9605_0351</name>
</gene>
<name>TRUA_SYNSC</name>
<protein>
    <recommendedName>
        <fullName evidence="1">tRNA pseudouridine synthase A</fullName>
        <ecNumber evidence="1">5.4.99.12</ecNumber>
    </recommendedName>
    <alternativeName>
        <fullName evidence="1">tRNA pseudouridine(38-40) synthase</fullName>
    </alternativeName>
    <alternativeName>
        <fullName evidence="1">tRNA pseudouridylate synthase I</fullName>
    </alternativeName>
    <alternativeName>
        <fullName evidence="1">tRNA-uridine isomerase I</fullName>
    </alternativeName>
</protein>
<reference key="1">
    <citation type="submission" date="2005-07" db="EMBL/GenBank/DDBJ databases">
        <title>Complete sequence of Synechococcus sp. CC9605.</title>
        <authorList>
            <consortium name="US DOE Joint Genome Institute"/>
            <person name="Copeland A."/>
            <person name="Lucas S."/>
            <person name="Lapidus A."/>
            <person name="Barry K."/>
            <person name="Detter J.C."/>
            <person name="Glavina T."/>
            <person name="Hammon N."/>
            <person name="Israni S."/>
            <person name="Pitluck S."/>
            <person name="Schmutz J."/>
            <person name="Martinez M."/>
            <person name="Larimer F."/>
            <person name="Land M."/>
            <person name="Kyrpides N."/>
            <person name="Ivanova N."/>
            <person name="Richardson P."/>
        </authorList>
    </citation>
    <scope>NUCLEOTIDE SEQUENCE [LARGE SCALE GENOMIC DNA]</scope>
    <source>
        <strain>CC9605</strain>
    </source>
</reference>
<organism>
    <name type="scientific">Synechococcus sp. (strain CC9605)</name>
    <dbReference type="NCBI Taxonomy" id="110662"/>
    <lineage>
        <taxon>Bacteria</taxon>
        <taxon>Bacillati</taxon>
        <taxon>Cyanobacteriota</taxon>
        <taxon>Cyanophyceae</taxon>
        <taxon>Synechococcales</taxon>
        <taxon>Synechococcaceae</taxon>
        <taxon>Synechococcus</taxon>
    </lineage>
</organism>
<comment type="function">
    <text evidence="1">Formation of pseudouridine at positions 38, 39 and 40 in the anticodon stem and loop of transfer RNAs.</text>
</comment>
<comment type="catalytic activity">
    <reaction evidence="1">
        <text>uridine(38/39/40) in tRNA = pseudouridine(38/39/40) in tRNA</text>
        <dbReference type="Rhea" id="RHEA:22376"/>
        <dbReference type="Rhea" id="RHEA-COMP:10085"/>
        <dbReference type="Rhea" id="RHEA-COMP:10087"/>
        <dbReference type="ChEBI" id="CHEBI:65314"/>
        <dbReference type="ChEBI" id="CHEBI:65315"/>
        <dbReference type="EC" id="5.4.99.12"/>
    </reaction>
</comment>
<comment type="subunit">
    <text evidence="1">Homodimer.</text>
</comment>
<comment type="similarity">
    <text evidence="1">Belongs to the tRNA pseudouridine synthase TruA family.</text>
</comment>
<dbReference type="EC" id="5.4.99.12" evidence="1"/>
<dbReference type="EMBL" id="CP000110">
    <property type="protein sequence ID" value="ABB34127.1"/>
    <property type="molecule type" value="Genomic_DNA"/>
</dbReference>
<dbReference type="RefSeq" id="WP_011363373.1">
    <property type="nucleotide sequence ID" value="NC_007516.1"/>
</dbReference>
<dbReference type="SMR" id="Q3AMQ5"/>
<dbReference type="STRING" id="110662.Syncc9605_0351"/>
<dbReference type="KEGG" id="syd:Syncc9605_0351"/>
<dbReference type="eggNOG" id="COG0101">
    <property type="taxonomic scope" value="Bacteria"/>
</dbReference>
<dbReference type="HOGENOM" id="CLU_014673_0_1_3"/>
<dbReference type="OrthoDB" id="9811823at2"/>
<dbReference type="GO" id="GO:0003723">
    <property type="term" value="F:RNA binding"/>
    <property type="evidence" value="ECO:0007669"/>
    <property type="project" value="InterPro"/>
</dbReference>
<dbReference type="GO" id="GO:0160147">
    <property type="term" value="F:tRNA pseudouridine(38-40) synthase activity"/>
    <property type="evidence" value="ECO:0007669"/>
    <property type="project" value="UniProtKB-EC"/>
</dbReference>
<dbReference type="GO" id="GO:0031119">
    <property type="term" value="P:tRNA pseudouridine synthesis"/>
    <property type="evidence" value="ECO:0007669"/>
    <property type="project" value="UniProtKB-UniRule"/>
</dbReference>
<dbReference type="CDD" id="cd02570">
    <property type="entry name" value="PseudoU_synth_EcTruA"/>
    <property type="match status" value="1"/>
</dbReference>
<dbReference type="FunFam" id="3.30.70.580:FF:000001">
    <property type="entry name" value="tRNA pseudouridine synthase A"/>
    <property type="match status" value="1"/>
</dbReference>
<dbReference type="Gene3D" id="3.30.70.660">
    <property type="entry name" value="Pseudouridine synthase I, catalytic domain, C-terminal subdomain"/>
    <property type="match status" value="1"/>
</dbReference>
<dbReference type="Gene3D" id="3.30.70.580">
    <property type="entry name" value="Pseudouridine synthase I, catalytic domain, N-terminal subdomain"/>
    <property type="match status" value="1"/>
</dbReference>
<dbReference type="HAMAP" id="MF_00171">
    <property type="entry name" value="TruA"/>
    <property type="match status" value="1"/>
</dbReference>
<dbReference type="InterPro" id="IPR020103">
    <property type="entry name" value="PsdUridine_synth_cat_dom_sf"/>
</dbReference>
<dbReference type="InterPro" id="IPR001406">
    <property type="entry name" value="PsdUridine_synth_TruA"/>
</dbReference>
<dbReference type="InterPro" id="IPR020097">
    <property type="entry name" value="PsdUridine_synth_TruA_a/b_dom"/>
</dbReference>
<dbReference type="InterPro" id="IPR020095">
    <property type="entry name" value="PsdUridine_synth_TruA_C"/>
</dbReference>
<dbReference type="InterPro" id="IPR020094">
    <property type="entry name" value="TruA/RsuA/RluB/E/F_N"/>
</dbReference>
<dbReference type="NCBIfam" id="TIGR00071">
    <property type="entry name" value="hisT_truA"/>
    <property type="match status" value="1"/>
</dbReference>
<dbReference type="PANTHER" id="PTHR11142">
    <property type="entry name" value="PSEUDOURIDYLATE SYNTHASE"/>
    <property type="match status" value="1"/>
</dbReference>
<dbReference type="PANTHER" id="PTHR11142:SF0">
    <property type="entry name" value="TRNA PSEUDOURIDINE SYNTHASE-LIKE 1"/>
    <property type="match status" value="1"/>
</dbReference>
<dbReference type="Pfam" id="PF01416">
    <property type="entry name" value="PseudoU_synth_1"/>
    <property type="match status" value="2"/>
</dbReference>
<dbReference type="PIRSF" id="PIRSF001430">
    <property type="entry name" value="tRNA_psdUrid_synth"/>
    <property type="match status" value="1"/>
</dbReference>
<dbReference type="SUPFAM" id="SSF55120">
    <property type="entry name" value="Pseudouridine synthase"/>
    <property type="match status" value="1"/>
</dbReference>
<feature type="chain" id="PRO_1000017203" description="tRNA pseudouridine synthase A">
    <location>
        <begin position="1"/>
        <end position="293"/>
    </location>
</feature>
<feature type="active site" description="Nucleophile" evidence="1">
    <location>
        <position position="67"/>
    </location>
</feature>
<feature type="binding site" evidence="1">
    <location>
        <position position="125"/>
    </location>
    <ligand>
        <name>substrate</name>
    </ligand>
</feature>
<sequence>MNTEPSSAGPEPASLQRIALSLQYDGSSFCGWQRQRNGRSVQAVLEDAIAQLDPHRPVQTFAAGRTDAGVHAAGQVVHFDCSGPIPARKWAPALNGRLPSTIRVRESVARPLDWHACYSATYRRYRYTIHNGRRPNLFLSPWSWHCYQHRLDESRMRDALSSMLGLHDFSAFMKAGSRRAHARTTVQEVLVERQGDLLRVEIQASGFLYGMVRLLMAQLVAVGEHRLSVAAFEQRWRERRRHEVKEAAPAAGLCLLRAGYAKPIFTKAGWYDSQPWFFLAESDPPTDPPSTPG</sequence>
<keyword id="KW-0413">Isomerase</keyword>
<keyword id="KW-0819">tRNA processing</keyword>